<name>SHAN3_MOUSE</name>
<protein>
    <recommendedName>
        <fullName>SH3 and multiple ankyrin repeat domains protein 3</fullName>
        <shortName>Shank3</shortName>
    </recommendedName>
    <alternativeName>
        <fullName>Proline-rich synapse-associated protein 2</fullName>
        <shortName>ProSAP2</shortName>
    </alternativeName>
    <alternativeName>
        <fullName>SPANK-2</fullName>
    </alternativeName>
</protein>
<comment type="function">
    <text evidence="10 11 13 14">Major scaffold postsynaptic density protein which interacts with multiple proteins and complexes to orchestrate the dendritic spine and synapse formation, maturation and maintenance. Interconnects receptors of the postsynaptic membrane including NMDA-type and metabotropic glutamate receptors via complexes with GKAP/PSD-95 and HOMER, respectively, and the actin-based cytoskeleton. Plays a role in the structural and functional organization of the dendritic spine and synaptic junction through the interaction with Arp2/3 and WAVE1 complex as well as the promotion of the F-actin clusters. By way of this control of actin dynamics, participates in the regulation of developing neurons growth cone motility and the NMDA receptor-signaling. Also modulates GRIA1 exocytosis and GRM5/MGLUR5 expression and signaling to control the AMPA and metabotropic glutamate receptor-mediated synaptic transmission and plasticity. May be required at an early stage of synapse formation and be inhibited by IGF1 to promote synapse maturation.</text>
</comment>
<comment type="subunit">
    <text evidence="2 9 11 13 14 17 18">May homomultimerize via its SAM domain. Interacts with BAIAP2, DBNL and SLC17A7/VGLUT1. Interacts with DLGAP1/GKAP, GRM1/MGLUR1, GRM5/MGLUR5 and LZTS3 C-termini via its PDZ domain. Interacts with ABI1, HOMER1, HOMER2, HOMER3 and CTTN/cortactin SH3 domain. Is part of a complex with DLG4/PSD-95 and DLGAP1/GKAP. Interacts (via PDZ domain) with the GRIA1 subunit of the AMPA receptor (via PDZ-binding motif). Interacts with WASF1 and CYFIP2; the interactions mediate the association of SHANK3 with the WAVE1 complex. Interacts with ARPC2; the interaction probably mediates the association of SHANK3 with the Arp2/3 complex. Interacts (via ANK repeats) with SHARPIN and SPTAN1. Interacts (via PDZ domain) with ARHGAP44 (probably via PDZ-binding motif); the interaction takes place in dendritic spines and promotes GRIA1 exocytosis. Interacts with CAMK2A (By similarity). Interacts with DIP2A (PubMed:31600191). Interacts with ADGRL3 (PubMed:38233523).</text>
</comment>
<comment type="interaction">
    <interactant intactId="EBI-771450">
        <id>Q4ACU6</id>
    </interactant>
    <interactant intactId="EBI-771498">
        <id>Q8BKX1</id>
        <label>Baiap2</label>
    </interactant>
    <organismsDiffer>false</organismsDiffer>
    <experiments>6</experiments>
</comment>
<comment type="interaction">
    <interactant intactId="EBI-771450">
        <id>Q4ACU6</id>
    </interactant>
    <interactant intactId="EBI-773783">
        <id>Q5SQX6</id>
        <label>Cyfip2</label>
    </interactant>
    <organismsDiffer>false</organismsDiffer>
    <experiments>3</experiments>
</comment>
<comment type="interaction">
    <interactant intactId="EBI-771450">
        <id>Q4ACU6</id>
    </interactant>
    <interactant intactId="EBI-400138">
        <id>Q91XM9</id>
        <label>Dlg2</label>
    </interactant>
    <organismsDiffer>false</organismsDiffer>
    <experiments>4</experiments>
</comment>
<comment type="interaction">
    <interactant intactId="EBI-771450">
        <id>Q4ACU6</id>
    </interactant>
    <interactant intactId="EBI-400152">
        <id>Q9D415</id>
        <label>Dlgap1</label>
    </interactant>
    <organismsDiffer>false</organismsDiffer>
    <experiments>4</experiments>
</comment>
<comment type="interaction">
    <interactant intactId="EBI-771450">
        <id>Q4ACU6</id>
    </interactant>
    <interactant intactId="EBI-396980">
        <id>Q9Z2Y3</id>
        <label>Homer1</label>
    </interactant>
    <organismsDiffer>false</organismsDiffer>
    <experiments>8</experiments>
</comment>
<comment type="interaction">
    <interactant intactId="EBI-16201983">
        <id>Q4ACU6-1</id>
    </interactant>
    <interactant intactId="EBI-11173743">
        <id>O60741</id>
        <label>HCN1</label>
    </interactant>
    <organismsDiffer>true</organismsDiffer>
    <experiments>4</experiments>
</comment>
<comment type="interaction">
    <interactant intactId="EBI-16201983">
        <id>Q4ACU6-1</id>
    </interactant>
    <interactant intactId="EBI-1751885">
        <id>Q9UL51</id>
        <label>HCN2</label>
    </interactant>
    <organismsDiffer>true</organismsDiffer>
    <experiments>3</experiments>
</comment>
<comment type="interaction">
    <interactant intactId="EBI-16201983">
        <id>Q4ACU6-1</id>
    </interactant>
    <interactant intactId="EBI-11178054">
        <id>Q9P1Z3</id>
        <label>HCN3</label>
    </interactant>
    <organismsDiffer>true</organismsDiffer>
    <experiments>3</experiments>
</comment>
<comment type="subcellular location">
    <subcellularLocation>
        <location>Cytoplasm</location>
    </subcellularLocation>
    <subcellularLocation>
        <location>Synapse</location>
    </subcellularLocation>
    <subcellularLocation>
        <location>Postsynaptic density</location>
    </subcellularLocation>
    <subcellularLocation>
        <location evidence="1">Cell projection</location>
        <location evidence="1">Dendritic spine</location>
    </subcellularLocation>
    <text>In neuronal cells, extends into the region subjacent to the postsynaptic density (PSD).</text>
</comment>
<comment type="alternative products">
    <event type="alternative promoter"/>
    <event type="alternative splicing"/>
    <isoform>
        <id>Q4ACU6-1</id>
        <name>1</name>
        <name>A</name>
        <name>Alpha</name>
        <sequence type="displayed"/>
    </isoform>
    <isoform>
        <id>Q4ACU6-2</id>
        <name>2</name>
        <name>B</name>
        <sequence type="described" ref="VSP_053612 VSP_053613 VSP_053614 VSP_053615"/>
    </isoform>
    <isoform>
        <id>Q4ACU6-3</id>
        <name>4</name>
        <name>C3</name>
        <name>Beta</name>
        <sequence type="described" ref="VSP_053611"/>
    </isoform>
    <isoform>
        <id>Q4ACU6-6</id>
        <name>5</name>
        <name>C4</name>
        <sequence type="described" ref="VSP_053611 VSP_053614 VSP_053615"/>
    </isoform>
    <isoform>
        <id>Q4ACU6-7</id>
        <name>6</name>
        <name>D1</name>
        <sequence type="described" ref="VSP_053609"/>
    </isoform>
    <isoform>
        <id>Q4ACU6-8</id>
        <name>7</name>
        <name>D2</name>
        <sequence type="described" ref="VSP_053608"/>
    </isoform>
    <isoform>
        <id>Q4ACU6-9</id>
        <name>8</name>
        <name>E1</name>
        <sequence type="described" ref="VSP_053607"/>
    </isoform>
    <isoform>
        <id>Q4ACU6-10</id>
        <name>9</name>
        <name>E2</name>
        <sequence type="described" ref="VSP_053607 VSP_053613"/>
    </isoform>
    <isoform>
        <id>Q4ACU6-11</id>
        <name>3</name>
        <name>C1</name>
        <sequence type="described" ref="VSP_053610"/>
    </isoform>
    <isoform>
        <id>Q4ACU6-12</id>
        <name>10</name>
        <name>F</name>
        <sequence type="described" ref="VSP_053606"/>
    </isoform>
    <text evidence="11 15">Additional isoform seem to exist. These isoforms may be the product of multiple intragenic promoter and/or alternative splicing.</text>
</comment>
<comment type="tissue specificity">
    <text evidence="10 11 14">In brain, highly expressed in striatum, thalamus, hippocampus and granule cells of the cerebellum.</text>
</comment>
<comment type="developmental stage">
    <text evidence="15">Isoform 3 is weakly expressed at 17 dpc but its expression increases after birth.</text>
</comment>
<comment type="domain">
    <text evidence="1">In isoform 1, the N-terminal region preceding the ANK repeats interacts with the 6 ANK repeats in an intramolecular manner, thereby restricting access to ligands, such as SHARPIN and SPTAN1.</text>
</comment>
<comment type="disruption phenotype">
    <text evidence="10 11 12 16">Animals deficient for isoforms 1-7 exhibit self-injourious repetitive grooming and deficits in social interaction. They show defects at striatal synapses and cortico-striatal circuits with an increase in striatal volume, dendritic length, and surface area and a decrease of spine density, length and thickness of PSD. They seem to have an altered molecular composition of postsynaptic machinery in the striatum (PubMed:21423165). In contrast, animals deficient for isoforms 1 and 2 exhibit a normal initiation of social interaction with a perturbed recognition of social novelty (PubMed:21423165). In PubMed:21558424, animals deficient for isoforms 1 and 2 show abnormal social behaviors, communication patterns, repetitive behaviors, learning and memory. In CA1 hippocampus, the synaptic plasticity is impaired with longer dendritic spines, decreased spine density and deficient long-term potentiation. The expression of specific synaptic scaffolding proteins and receptor subunits are altered. Animals deficient for isoforms 1-5 exhibit self-injourious repetitive grooming, brain-region-specific up-regulation of ionotropic glutamate receptors and increased levels of SHANK2 (PubMed:22699619). Animals deficient for predominant isoforms containing exon 21 exhibit motor-coordination deficits, hypersensitivity to heat, novelty avoidance, altered locomotor response to novelty and minimal social abnormalities. They show a decrease in NMDA-AMPA excitatory postsynaptic current ratio in hippocampal CA1, reduced long-term potentiation and deficits in hippocampus-dependent spatial learning and memory (PubMed:24259569).</text>
</comment>
<comment type="miscellaneous">
    <molecule>Isoform 2</molecule>
    <text evidence="21">Produced by alternative promoter usage and alternative splicing.</text>
</comment>
<comment type="miscellaneous">
    <molecule>Isoform 4</molecule>
    <text evidence="21">Produced by alternative splicing of isoform 3.</text>
</comment>
<comment type="miscellaneous">
    <molecule>Isoform 5</molecule>
    <text evidence="21">Produced by alternative splicing of isoform 3.</text>
</comment>
<comment type="miscellaneous">
    <molecule>Isoform 6</molecule>
    <text evidence="21">Produced by alternative promoter usage.</text>
</comment>
<comment type="miscellaneous">
    <molecule>Isoform 7</molecule>
    <text evidence="21">Produced by alternative splicing of isoform 6.</text>
</comment>
<comment type="miscellaneous">
    <molecule>Isoform 8</molecule>
    <text evidence="21">Produced by alternative promoter usage.</text>
</comment>
<comment type="miscellaneous">
    <molecule>Isoform 9</molecule>
    <text evidence="21">Produced by alternative splicing of isoform 8.</text>
</comment>
<comment type="miscellaneous">
    <molecule>Isoform 3</molecule>
    <text evidence="21">Produced by alternative promoter usage.</text>
</comment>
<comment type="miscellaneous">
    <molecule>Isoform 10</molecule>
    <text evidence="21">Produced by alternative promoter usage.</text>
</comment>
<comment type="similarity">
    <text evidence="21">Belongs to the SHANK family.</text>
</comment>
<dbReference type="EMBL" id="AJ245904">
    <property type="protein sequence ID" value="CAB89816.1"/>
    <property type="molecule type" value="mRNA"/>
</dbReference>
<dbReference type="EMBL" id="AB841411">
    <property type="protein sequence ID" value="BAN67189.1"/>
    <property type="molecule type" value="mRNA"/>
</dbReference>
<dbReference type="EMBL" id="AB841412">
    <property type="protein sequence ID" value="BAN67190.1"/>
    <property type="molecule type" value="mRNA"/>
</dbReference>
<dbReference type="EMBL" id="AC122401">
    <property type="status" value="NOT_ANNOTATED_CDS"/>
    <property type="molecule type" value="Genomic_DNA"/>
</dbReference>
<dbReference type="EMBL" id="AC137513">
    <property type="status" value="NOT_ANNOTATED_CDS"/>
    <property type="molecule type" value="Genomic_DNA"/>
</dbReference>
<dbReference type="EMBL" id="AB231013">
    <property type="protein sequence ID" value="BAE16756.1"/>
    <property type="molecule type" value="mRNA"/>
</dbReference>
<dbReference type="EMBL" id="AK173228">
    <property type="protein sequence ID" value="BAD32506.1"/>
    <property type="molecule type" value="mRNA"/>
</dbReference>
<dbReference type="EMBL" id="HQ405757">
    <property type="protein sequence ID" value="AEB77764.1"/>
    <property type="molecule type" value="mRNA"/>
</dbReference>
<dbReference type="EMBL" id="HQ405758">
    <property type="protein sequence ID" value="AEB77765.1"/>
    <property type="molecule type" value="mRNA"/>
</dbReference>
<dbReference type="EMBL" id="HQ405759">
    <property type="protein sequence ID" value="AEB77766.1"/>
    <property type="molecule type" value="mRNA"/>
</dbReference>
<dbReference type="EMBL" id="HQ405760">
    <property type="protein sequence ID" value="AEB77767.1"/>
    <property type="molecule type" value="mRNA"/>
</dbReference>
<dbReference type="EMBL" id="HQ405761">
    <property type="protein sequence ID" value="AEB77768.1"/>
    <property type="molecule type" value="mRNA"/>
</dbReference>
<dbReference type="EMBL" id="HQ405762">
    <property type="protein sequence ID" value="AEB77769.1"/>
    <property type="molecule type" value="mRNA"/>
</dbReference>
<dbReference type="EMBL" id="HQ405763">
    <property type="protein sequence ID" value="AEB77770.1"/>
    <property type="molecule type" value="mRNA"/>
</dbReference>
<dbReference type="RefSeq" id="NP_067398.2">
    <property type="nucleotide sequence ID" value="NM_021423.3"/>
</dbReference>
<dbReference type="PDB" id="3O5N">
    <property type="method" value="X-ray"/>
    <property type="resolution" value="1.83 A"/>
    <property type="chains" value="A/B/C/D/E/F/G/H=562-669"/>
</dbReference>
<dbReference type="PDB" id="5IZU">
    <property type="method" value="X-ray"/>
    <property type="resolution" value="2.49 A"/>
    <property type="chains" value="A/C=533-665"/>
</dbReference>
<dbReference type="PDB" id="6KYH">
    <property type="method" value="X-ray"/>
    <property type="resolution" value="3.30 A"/>
    <property type="chains" value="A/B/C/D=8-362"/>
</dbReference>
<dbReference type="PDB" id="6KYK">
    <property type="method" value="X-ray"/>
    <property type="resolution" value="2.82 A"/>
    <property type="chains" value="A/B=1-368"/>
</dbReference>
<dbReference type="PDBsum" id="3O5N"/>
<dbReference type="PDBsum" id="5IZU"/>
<dbReference type="PDBsum" id="6KYH"/>
<dbReference type="PDBsum" id="6KYK"/>
<dbReference type="SMR" id="Q4ACU6"/>
<dbReference type="BioGRID" id="208407">
    <property type="interactions" value="352"/>
</dbReference>
<dbReference type="DIP" id="DIP-32262N"/>
<dbReference type="FunCoup" id="Q4ACU6">
    <property type="interactions" value="566"/>
</dbReference>
<dbReference type="IntAct" id="Q4ACU6">
    <property type="interactions" value="437"/>
</dbReference>
<dbReference type="MINT" id="Q4ACU6"/>
<dbReference type="STRING" id="10090.ENSMUSP00000104932"/>
<dbReference type="BindingDB" id="Q4ACU6"/>
<dbReference type="ChEMBL" id="CHEMBL5465313"/>
<dbReference type="GlyGen" id="Q4ACU6">
    <property type="glycosylation" value="4 sites, 1 O-linked glycan (1 site)"/>
</dbReference>
<dbReference type="iPTMnet" id="Q4ACU6"/>
<dbReference type="PhosphoSitePlus" id="Q4ACU6"/>
<dbReference type="SwissPalm" id="Q4ACU6"/>
<dbReference type="jPOST" id="Q4ACU6"/>
<dbReference type="PaxDb" id="10090-ENSMUSP00000104932"/>
<dbReference type="PeptideAtlas" id="Q4ACU6"/>
<dbReference type="ProteomicsDB" id="261215">
    <molecule id="Q4ACU6-1"/>
</dbReference>
<dbReference type="ProteomicsDB" id="261216">
    <molecule id="Q4ACU6-2"/>
</dbReference>
<dbReference type="ProteomicsDB" id="261217">
    <molecule id="Q4ACU6-3"/>
</dbReference>
<dbReference type="ProteomicsDB" id="261218">
    <molecule id="Q4ACU6-6"/>
</dbReference>
<dbReference type="ProteomicsDB" id="261219">
    <molecule id="Q4ACU6-7"/>
</dbReference>
<dbReference type="ProteomicsDB" id="261220">
    <molecule id="Q4ACU6-8"/>
</dbReference>
<dbReference type="ProteomicsDB" id="261221">
    <molecule id="Q4ACU6-9"/>
</dbReference>
<dbReference type="ProteomicsDB" id="261222">
    <molecule id="Q4ACU6-10"/>
</dbReference>
<dbReference type="ProteomicsDB" id="261223">
    <molecule id="Q4ACU6-11"/>
</dbReference>
<dbReference type="ProteomicsDB" id="261224">
    <molecule id="Q4ACU6-12"/>
</dbReference>
<dbReference type="ABCD" id="Q4ACU6">
    <property type="antibodies" value="4 sequenced antibodies"/>
</dbReference>
<dbReference type="Antibodypedia" id="47836">
    <property type="antibodies" value="180 antibodies from 19 providers"/>
</dbReference>
<dbReference type="DNASU" id="58234"/>
<dbReference type="Ensembl" id="ENSMUST00000109309.9">
    <molecule id="Q4ACU6-1"/>
    <property type="protein sequence ID" value="ENSMUSP00000104932.3"/>
    <property type="gene ID" value="ENSMUSG00000022623.18"/>
</dbReference>
<dbReference type="Ensembl" id="ENSMUST00000230807.2">
    <molecule id="Q4ACU6-6"/>
    <property type="protein sequence ID" value="ENSMUSP00000155608.2"/>
    <property type="gene ID" value="ENSMUSG00000022623.18"/>
</dbReference>
<dbReference type="GeneID" id="58234"/>
<dbReference type="KEGG" id="mmu:58234"/>
<dbReference type="UCSC" id="uc007xha.2">
    <molecule id="Q4ACU6-1"/>
    <property type="organism name" value="mouse"/>
</dbReference>
<dbReference type="UCSC" id="uc007xhb.2">
    <molecule id="Q4ACU6-2"/>
    <property type="organism name" value="mouse"/>
</dbReference>
<dbReference type="UCSC" id="uc033gwe.1">
    <molecule id="Q4ACU6-3"/>
    <property type="organism name" value="mouse"/>
</dbReference>
<dbReference type="UCSC" id="uc033gwf.1">
    <molecule id="Q4ACU6-6"/>
    <property type="organism name" value="mouse"/>
</dbReference>
<dbReference type="UCSC" id="uc056zac.1">
    <molecule id="Q4ACU6-10"/>
    <property type="organism name" value="mouse"/>
</dbReference>
<dbReference type="AGR" id="MGI:1930016"/>
<dbReference type="CTD" id="85358"/>
<dbReference type="MGI" id="MGI:1930016">
    <property type="gene designation" value="Shank3"/>
</dbReference>
<dbReference type="VEuPathDB" id="HostDB:ENSMUSG00000022623"/>
<dbReference type="eggNOG" id="KOG0504">
    <property type="taxonomic scope" value="Eukaryota"/>
</dbReference>
<dbReference type="eggNOG" id="KOG4375">
    <property type="taxonomic scope" value="Eukaryota"/>
</dbReference>
<dbReference type="GeneTree" id="ENSGT00940000153561"/>
<dbReference type="HOGENOM" id="CLU_001824_2_0_1"/>
<dbReference type="InParanoid" id="Q4ACU6"/>
<dbReference type="OMA" id="QLEFCAE"/>
<dbReference type="OrthoDB" id="445896at2759"/>
<dbReference type="PhylomeDB" id="Q4ACU6"/>
<dbReference type="TreeFam" id="TF324593"/>
<dbReference type="Reactome" id="R-MMU-6794361">
    <property type="pathway name" value="Neurexins and neuroligins"/>
</dbReference>
<dbReference type="Reactome" id="R-MMU-8853659">
    <property type="pathway name" value="RET signaling"/>
</dbReference>
<dbReference type="BioGRID-ORCS" id="58234">
    <property type="hits" value="1 hit in 76 CRISPR screens"/>
</dbReference>
<dbReference type="CD-CODE" id="50C2EE40">
    <property type="entry name" value="Presynaptic clusters"/>
</dbReference>
<dbReference type="CD-CODE" id="6D6C8CDE">
    <property type="entry name" value="Synthetic Condensate 000237"/>
</dbReference>
<dbReference type="CD-CODE" id="88B1263E">
    <property type="entry name" value="Synthetic Condensate 000240"/>
</dbReference>
<dbReference type="CD-CODE" id="9800A23F">
    <property type="entry name" value="Synthetic Condensate 000231"/>
</dbReference>
<dbReference type="CD-CODE" id="A08D2591">
    <property type="entry name" value="Synthetic Condensate 000245"/>
</dbReference>
<dbReference type="CD-CODE" id="A81FC5A0">
    <property type="entry name" value="Synthetic Condensate 000233"/>
</dbReference>
<dbReference type="CD-CODE" id="CE726F99">
    <property type="entry name" value="Postsynaptic density"/>
</dbReference>
<dbReference type="CD-CODE" id="D23CAB07">
    <property type="entry name" value="Synthetic Condensate 000243"/>
</dbReference>
<dbReference type="CD-CODE" id="E9A74F70">
    <property type="entry name" value="Synthetic Condensate 000227"/>
</dbReference>
<dbReference type="CD-CODE" id="F7E61417">
    <property type="entry name" value="Synthetic Condensate 000244"/>
</dbReference>
<dbReference type="CD-CODE" id="FCE689D0">
    <property type="entry name" value="Synthetic Condensate 000238"/>
</dbReference>
<dbReference type="ChiTaRS" id="Shank3">
    <property type="organism name" value="mouse"/>
</dbReference>
<dbReference type="EvolutionaryTrace" id="Q4ACU6"/>
<dbReference type="PRO" id="PR:Q4ACU6"/>
<dbReference type="Proteomes" id="UP000000589">
    <property type="component" value="Chromosome 15"/>
</dbReference>
<dbReference type="RNAct" id="Q4ACU6">
    <property type="molecule type" value="protein"/>
</dbReference>
<dbReference type="Bgee" id="ENSMUSG00000022623">
    <property type="expression patterns" value="Expressed in medial dorsal nucleus of thalamus and 199 other cell types or tissues"/>
</dbReference>
<dbReference type="ExpressionAtlas" id="Q4ACU6">
    <property type="expression patterns" value="baseline and differential"/>
</dbReference>
<dbReference type="GO" id="GO:0060170">
    <property type="term" value="C:ciliary membrane"/>
    <property type="evidence" value="ECO:0000250"/>
    <property type="project" value="BHF-UCL"/>
</dbReference>
<dbReference type="GO" id="GO:0005737">
    <property type="term" value="C:cytoplasm"/>
    <property type="evidence" value="ECO:0007669"/>
    <property type="project" value="UniProtKB-SubCell"/>
</dbReference>
<dbReference type="GO" id="GO:0043197">
    <property type="term" value="C:dendritic spine"/>
    <property type="evidence" value="ECO:0007669"/>
    <property type="project" value="UniProtKB-SubCell"/>
</dbReference>
<dbReference type="GO" id="GO:0060076">
    <property type="term" value="C:excitatory synapse"/>
    <property type="evidence" value="ECO:0000305"/>
    <property type="project" value="BHF-UCL"/>
</dbReference>
<dbReference type="GO" id="GO:0098978">
    <property type="term" value="C:glutamatergic synapse"/>
    <property type="evidence" value="ECO:0000314"/>
    <property type="project" value="SynGO"/>
</dbReference>
<dbReference type="GO" id="GO:0043005">
    <property type="term" value="C:neuron projection"/>
    <property type="evidence" value="ECO:0000314"/>
    <property type="project" value="BHF-UCL"/>
</dbReference>
<dbReference type="GO" id="GO:0044309">
    <property type="term" value="C:neuron spine"/>
    <property type="evidence" value="ECO:0000314"/>
    <property type="project" value="BHF-UCL"/>
</dbReference>
<dbReference type="GO" id="GO:0005886">
    <property type="term" value="C:plasma membrane"/>
    <property type="evidence" value="ECO:0000314"/>
    <property type="project" value="BHF-UCL"/>
</dbReference>
<dbReference type="GO" id="GO:0014069">
    <property type="term" value="C:postsynaptic density"/>
    <property type="evidence" value="ECO:0000250"/>
    <property type="project" value="BHF-UCL"/>
</dbReference>
<dbReference type="GO" id="GO:0003779">
    <property type="term" value="F:actin binding"/>
    <property type="evidence" value="ECO:0007669"/>
    <property type="project" value="UniProtKB-KW"/>
</dbReference>
<dbReference type="GO" id="GO:0035255">
    <property type="term" value="F:ionotropic glutamate receptor binding"/>
    <property type="evidence" value="ECO:0000353"/>
    <property type="project" value="BHF-UCL"/>
</dbReference>
<dbReference type="GO" id="GO:0097110">
    <property type="term" value="F:scaffold protein binding"/>
    <property type="evidence" value="ECO:0000353"/>
    <property type="project" value="BHF-UCL"/>
</dbReference>
<dbReference type="GO" id="GO:0017124">
    <property type="term" value="F:SH3 domain binding"/>
    <property type="evidence" value="ECO:0000250"/>
    <property type="project" value="BHF-UCL"/>
</dbReference>
<dbReference type="GO" id="GO:0098919">
    <property type="term" value="F:structural constituent of postsynaptic density"/>
    <property type="evidence" value="ECO:0000314"/>
    <property type="project" value="SynGO"/>
</dbReference>
<dbReference type="GO" id="GO:0030160">
    <property type="term" value="F:synaptic receptor adaptor activity"/>
    <property type="evidence" value="ECO:0000250"/>
    <property type="project" value="BHF-UCL"/>
</dbReference>
<dbReference type="GO" id="GO:0008270">
    <property type="term" value="F:zinc ion binding"/>
    <property type="evidence" value="ECO:0000250"/>
    <property type="project" value="BHF-UCL"/>
</dbReference>
<dbReference type="GO" id="GO:0097113">
    <property type="term" value="P:AMPA glutamate receptor clustering"/>
    <property type="evidence" value="ECO:0000315"/>
    <property type="project" value="CACAO"/>
</dbReference>
<dbReference type="GO" id="GO:0008306">
    <property type="term" value="P:associative learning"/>
    <property type="evidence" value="ECO:0000315"/>
    <property type="project" value="MGI"/>
</dbReference>
<dbReference type="GO" id="GO:0048854">
    <property type="term" value="P:brain morphogenesis"/>
    <property type="evidence" value="ECO:0000315"/>
    <property type="project" value="BHF-UCL"/>
</dbReference>
<dbReference type="GO" id="GO:0060997">
    <property type="term" value="P:dendritic spine morphogenesis"/>
    <property type="evidence" value="ECO:0000315"/>
    <property type="project" value="BHF-UCL"/>
</dbReference>
<dbReference type="GO" id="GO:0001838">
    <property type="term" value="P:embryonic epithelial tube formation"/>
    <property type="evidence" value="ECO:0000316"/>
    <property type="project" value="MGI"/>
</dbReference>
<dbReference type="GO" id="GO:0035640">
    <property type="term" value="P:exploration behavior"/>
    <property type="evidence" value="ECO:0000315"/>
    <property type="project" value="CACAO"/>
</dbReference>
<dbReference type="GO" id="GO:0010467">
    <property type="term" value="P:gene expression"/>
    <property type="evidence" value="ECO:0000315"/>
    <property type="project" value="MGI"/>
</dbReference>
<dbReference type="GO" id="GO:0014009">
    <property type="term" value="P:glial cell proliferation"/>
    <property type="evidence" value="ECO:0000315"/>
    <property type="project" value="MGI"/>
</dbReference>
<dbReference type="GO" id="GO:0097117">
    <property type="term" value="P:guanylate kinase-associated protein clustering"/>
    <property type="evidence" value="ECO:0000315"/>
    <property type="project" value="CACAO"/>
</dbReference>
<dbReference type="GO" id="GO:0007612">
    <property type="term" value="P:learning"/>
    <property type="evidence" value="ECO:0000315"/>
    <property type="project" value="CACAO"/>
</dbReference>
<dbReference type="GO" id="GO:0007611">
    <property type="term" value="P:learning or memory"/>
    <property type="evidence" value="ECO:0000315"/>
    <property type="project" value="MGI"/>
</dbReference>
<dbReference type="GO" id="GO:0040011">
    <property type="term" value="P:locomotion"/>
    <property type="evidence" value="ECO:0000315"/>
    <property type="project" value="CACAO"/>
</dbReference>
<dbReference type="GO" id="GO:0007626">
    <property type="term" value="P:locomotory behavior"/>
    <property type="evidence" value="ECO:0000315"/>
    <property type="project" value="MGI"/>
</dbReference>
<dbReference type="GO" id="GO:0035641">
    <property type="term" value="P:locomotory exploration behavior"/>
    <property type="evidence" value="ECO:0000315"/>
    <property type="project" value="BHF-UCL"/>
</dbReference>
<dbReference type="GO" id="GO:0060292">
    <property type="term" value="P:long-term synaptic depression"/>
    <property type="evidence" value="ECO:0000315"/>
    <property type="project" value="CACAO"/>
</dbReference>
<dbReference type="GO" id="GO:0060291">
    <property type="term" value="P:long-term synaptic potentiation"/>
    <property type="evidence" value="ECO:0000315"/>
    <property type="project" value="CACAO"/>
</dbReference>
<dbReference type="GO" id="GO:0000165">
    <property type="term" value="P:MAPK cascade"/>
    <property type="evidence" value="ECO:0000316"/>
    <property type="project" value="MGI"/>
</dbReference>
<dbReference type="GO" id="GO:0007613">
    <property type="term" value="P:memory"/>
    <property type="evidence" value="ECO:0000315"/>
    <property type="project" value="CACAO"/>
</dbReference>
<dbReference type="GO" id="GO:0050804">
    <property type="term" value="P:modulation of chemical synaptic transmission"/>
    <property type="evidence" value="ECO:0000314"/>
    <property type="project" value="SynGO"/>
</dbReference>
<dbReference type="GO" id="GO:0032232">
    <property type="term" value="P:negative regulation of actin filament bundle assembly"/>
    <property type="evidence" value="ECO:0000314"/>
    <property type="project" value="MGI"/>
</dbReference>
<dbReference type="GO" id="GO:0045794">
    <property type="term" value="P:negative regulation of cell volume"/>
    <property type="evidence" value="ECO:0000315"/>
    <property type="project" value="BHF-UCL"/>
</dbReference>
<dbReference type="GO" id="GO:0061351">
    <property type="term" value="P:neural precursor cell proliferation"/>
    <property type="evidence" value="ECO:0000315"/>
    <property type="project" value="MGI"/>
</dbReference>
<dbReference type="GO" id="GO:0050885">
    <property type="term" value="P:neuromuscular process controlling balance"/>
    <property type="evidence" value="ECO:0000315"/>
    <property type="project" value="CACAO"/>
</dbReference>
<dbReference type="GO" id="GO:0097114">
    <property type="term" value="P:NMDA glutamate receptor clustering"/>
    <property type="evidence" value="ECO:0000315"/>
    <property type="project" value="CACAO"/>
</dbReference>
<dbReference type="GO" id="GO:0060999">
    <property type="term" value="P:positive regulation of dendritic spine development"/>
    <property type="evidence" value="ECO:0000315"/>
    <property type="project" value="BHF-UCL"/>
</dbReference>
<dbReference type="GO" id="GO:2000463">
    <property type="term" value="P:positive regulation of excitatory postsynaptic potential"/>
    <property type="evidence" value="ECO:0000315"/>
    <property type="project" value="BHF-UCL"/>
</dbReference>
<dbReference type="GO" id="GO:1900451">
    <property type="term" value="P:positive regulation of glutamate receptor signaling pathway"/>
    <property type="evidence" value="ECO:0000315"/>
    <property type="project" value="BHF-UCL"/>
</dbReference>
<dbReference type="GO" id="GO:0048170">
    <property type="term" value="P:positive regulation of long-term neuronal synaptic plasticity"/>
    <property type="evidence" value="ECO:0000315"/>
    <property type="project" value="BHF-UCL"/>
</dbReference>
<dbReference type="GO" id="GO:1900273">
    <property type="term" value="P:positive regulation of long-term synaptic potentiation"/>
    <property type="evidence" value="ECO:0000315"/>
    <property type="project" value="BHF-UCL"/>
</dbReference>
<dbReference type="GO" id="GO:0051835">
    <property type="term" value="P:positive regulation of synapse structural plasticity"/>
    <property type="evidence" value="ECO:0000315"/>
    <property type="project" value="BHF-UCL"/>
</dbReference>
<dbReference type="GO" id="GO:0051968">
    <property type="term" value="P:positive regulation of synaptic transmission, glutamatergic"/>
    <property type="evidence" value="ECO:0000315"/>
    <property type="project" value="BHF-UCL"/>
</dbReference>
<dbReference type="GO" id="GO:0097107">
    <property type="term" value="P:postsynaptic density assembly"/>
    <property type="evidence" value="ECO:0000315"/>
    <property type="project" value="BHF-UCL"/>
</dbReference>
<dbReference type="GO" id="GO:1904717">
    <property type="term" value="P:regulation of AMPA glutamate receptor clustering"/>
    <property type="evidence" value="ECO:0000315"/>
    <property type="project" value="MGI"/>
</dbReference>
<dbReference type="GO" id="GO:2000822">
    <property type="term" value="P:regulation of behavioral fear response"/>
    <property type="evidence" value="ECO:0000315"/>
    <property type="project" value="BHF-UCL"/>
</dbReference>
<dbReference type="GO" id="GO:0061001">
    <property type="term" value="P:regulation of dendritic spine morphogenesis"/>
    <property type="evidence" value="ECO:0000315"/>
    <property type="project" value="BHF-UCL"/>
</dbReference>
<dbReference type="GO" id="GO:2000821">
    <property type="term" value="P:regulation of grooming behavior"/>
    <property type="evidence" value="ECO:0000315"/>
    <property type="project" value="BHF-UCL"/>
</dbReference>
<dbReference type="GO" id="GO:1900452">
    <property type="term" value="P:regulation of long-term synaptic depression"/>
    <property type="evidence" value="ECO:0000315"/>
    <property type="project" value="BHF-UCL"/>
</dbReference>
<dbReference type="GO" id="GO:1900271">
    <property type="term" value="P:regulation of long-term synaptic potentiation"/>
    <property type="evidence" value="ECO:0000315"/>
    <property type="project" value="BHF-UCL"/>
</dbReference>
<dbReference type="GO" id="GO:0048167">
    <property type="term" value="P:regulation of synaptic plasticity"/>
    <property type="evidence" value="ECO:0000315"/>
    <property type="project" value="MGI"/>
</dbReference>
<dbReference type="GO" id="GO:0097396">
    <property type="term" value="P:response to interleukin-17"/>
    <property type="evidence" value="ECO:0000315"/>
    <property type="project" value="MGI"/>
</dbReference>
<dbReference type="GO" id="GO:0035176">
    <property type="term" value="P:social behavior"/>
    <property type="evidence" value="ECO:0000315"/>
    <property type="project" value="BHF-UCL"/>
</dbReference>
<dbReference type="GO" id="GO:0021773">
    <property type="term" value="P:striatal medium spiny neuron differentiation"/>
    <property type="evidence" value="ECO:0000315"/>
    <property type="project" value="BHF-UCL"/>
</dbReference>
<dbReference type="GO" id="GO:0007416">
    <property type="term" value="P:synapse assembly"/>
    <property type="evidence" value="ECO:0000315"/>
    <property type="project" value="BHF-UCL"/>
</dbReference>
<dbReference type="GO" id="GO:0071625">
    <property type="term" value="P:vocalization behavior"/>
    <property type="evidence" value="ECO:0000315"/>
    <property type="project" value="BHF-UCL"/>
</dbReference>
<dbReference type="CDD" id="cd06746">
    <property type="entry name" value="PDZ_SHANK1_3-like"/>
    <property type="match status" value="1"/>
</dbReference>
<dbReference type="CDD" id="cd09506">
    <property type="entry name" value="SAM_Shank1_2_3"/>
    <property type="match status" value="1"/>
</dbReference>
<dbReference type="DisProt" id="DP02376"/>
<dbReference type="FunFam" id="3.10.20.90:FF:000029">
    <property type="entry name" value="SH3 and multiple ankyrin repeat domains protein 1"/>
    <property type="match status" value="1"/>
</dbReference>
<dbReference type="FunFam" id="1.10.150.50:FF:000006">
    <property type="entry name" value="SH3 and multiple ankyrin repeat domains protein 2"/>
    <property type="match status" value="1"/>
</dbReference>
<dbReference type="FunFam" id="2.30.30.40:FF:000025">
    <property type="entry name" value="SH3 and multiple ankyrin repeat domains protein 2"/>
    <property type="match status" value="1"/>
</dbReference>
<dbReference type="FunFam" id="2.30.42.10:FF:000018">
    <property type="entry name" value="SH3 and multiple ankyrin repeat domains protein 2"/>
    <property type="match status" value="1"/>
</dbReference>
<dbReference type="FunFam" id="1.25.40.20:FF:000048">
    <property type="entry name" value="SH3 and multiple ankyrin repeat domains protein 3"/>
    <property type="match status" value="1"/>
</dbReference>
<dbReference type="FunFam" id="1.25.40.20:FF:000064">
    <property type="entry name" value="SH3 and multiple ankyrin repeat domains protein 3"/>
    <property type="match status" value="1"/>
</dbReference>
<dbReference type="Gene3D" id="2.30.42.10">
    <property type="match status" value="1"/>
</dbReference>
<dbReference type="Gene3D" id="1.25.40.20">
    <property type="entry name" value="Ankyrin repeat-containing domain"/>
    <property type="match status" value="2"/>
</dbReference>
<dbReference type="Gene3D" id="3.10.20.90">
    <property type="entry name" value="Phosphatidylinositol 3-kinase Catalytic Subunit, Chain A, domain 1"/>
    <property type="match status" value="1"/>
</dbReference>
<dbReference type="Gene3D" id="2.30.30.40">
    <property type="entry name" value="SH3 Domains"/>
    <property type="match status" value="1"/>
</dbReference>
<dbReference type="Gene3D" id="1.10.150.50">
    <property type="entry name" value="Transcription Factor, Ets-1"/>
    <property type="match status" value="1"/>
</dbReference>
<dbReference type="InterPro" id="IPR002110">
    <property type="entry name" value="Ankyrin_rpt"/>
</dbReference>
<dbReference type="InterPro" id="IPR036770">
    <property type="entry name" value="Ankyrin_rpt-contain_sf"/>
</dbReference>
<dbReference type="InterPro" id="IPR001478">
    <property type="entry name" value="PDZ"/>
</dbReference>
<dbReference type="InterPro" id="IPR041489">
    <property type="entry name" value="PDZ_6"/>
</dbReference>
<dbReference type="InterPro" id="IPR036034">
    <property type="entry name" value="PDZ_sf"/>
</dbReference>
<dbReference type="InterPro" id="IPR001660">
    <property type="entry name" value="SAM"/>
</dbReference>
<dbReference type="InterPro" id="IPR013761">
    <property type="entry name" value="SAM/pointed_sf"/>
</dbReference>
<dbReference type="InterPro" id="IPR036028">
    <property type="entry name" value="SH3-like_dom_sf"/>
</dbReference>
<dbReference type="InterPro" id="IPR001452">
    <property type="entry name" value="SH3_domain"/>
</dbReference>
<dbReference type="InterPro" id="IPR051569">
    <property type="entry name" value="SHANK"/>
</dbReference>
<dbReference type="PANTHER" id="PTHR24135">
    <property type="entry name" value="SH3 AND MULTIPLE ANKYRIN REPEAT DOMAINS PROTEIN"/>
    <property type="match status" value="1"/>
</dbReference>
<dbReference type="PANTHER" id="PTHR24135:SF4">
    <property type="entry name" value="SH3 AND MULTIPLE ANKYRIN REPEAT DOMAINS PROTEIN 3"/>
    <property type="match status" value="1"/>
</dbReference>
<dbReference type="Pfam" id="PF12796">
    <property type="entry name" value="Ank_2"/>
    <property type="match status" value="2"/>
</dbReference>
<dbReference type="Pfam" id="PF17820">
    <property type="entry name" value="PDZ_6"/>
    <property type="match status" value="1"/>
</dbReference>
<dbReference type="Pfam" id="PF00536">
    <property type="entry name" value="SAM_1"/>
    <property type="match status" value="1"/>
</dbReference>
<dbReference type="Pfam" id="PF07653">
    <property type="entry name" value="SH3_2"/>
    <property type="match status" value="1"/>
</dbReference>
<dbReference type="SMART" id="SM00248">
    <property type="entry name" value="ANK"/>
    <property type="match status" value="5"/>
</dbReference>
<dbReference type="SMART" id="SM00228">
    <property type="entry name" value="PDZ"/>
    <property type="match status" value="1"/>
</dbReference>
<dbReference type="SMART" id="SM00454">
    <property type="entry name" value="SAM"/>
    <property type="match status" value="1"/>
</dbReference>
<dbReference type="SMART" id="SM00326">
    <property type="entry name" value="SH3"/>
    <property type="match status" value="1"/>
</dbReference>
<dbReference type="SUPFAM" id="SSF48403">
    <property type="entry name" value="Ankyrin repeat"/>
    <property type="match status" value="1"/>
</dbReference>
<dbReference type="SUPFAM" id="SSF50156">
    <property type="entry name" value="PDZ domain-like"/>
    <property type="match status" value="1"/>
</dbReference>
<dbReference type="SUPFAM" id="SSF47769">
    <property type="entry name" value="SAM/Pointed domain"/>
    <property type="match status" value="1"/>
</dbReference>
<dbReference type="SUPFAM" id="SSF50044">
    <property type="entry name" value="SH3-domain"/>
    <property type="match status" value="1"/>
</dbReference>
<dbReference type="PROSITE" id="PS50297">
    <property type="entry name" value="ANK_REP_REGION"/>
    <property type="match status" value="1"/>
</dbReference>
<dbReference type="PROSITE" id="PS50088">
    <property type="entry name" value="ANK_REPEAT"/>
    <property type="match status" value="4"/>
</dbReference>
<dbReference type="PROSITE" id="PS50106">
    <property type="entry name" value="PDZ"/>
    <property type="match status" value="1"/>
</dbReference>
<dbReference type="PROSITE" id="PS50105">
    <property type="entry name" value="SAM_DOMAIN"/>
    <property type="match status" value="1"/>
</dbReference>
<dbReference type="PROSITE" id="PS50002">
    <property type="entry name" value="SH3"/>
    <property type="match status" value="1"/>
</dbReference>
<keyword id="KW-0002">3D-structure</keyword>
<keyword id="KW-0009">Actin-binding</keyword>
<keyword id="KW-0877">Alternative promoter usage</keyword>
<keyword id="KW-0025">Alternative splicing</keyword>
<keyword id="KW-0040">ANK repeat</keyword>
<keyword id="KW-0966">Cell projection</keyword>
<keyword id="KW-0175">Coiled coil</keyword>
<keyword id="KW-0963">Cytoplasm</keyword>
<keyword id="KW-0488">Methylation</keyword>
<keyword id="KW-0597">Phosphoprotein</keyword>
<keyword id="KW-1185">Reference proteome</keyword>
<keyword id="KW-0677">Repeat</keyword>
<keyword id="KW-0728">SH3 domain</keyword>
<keyword id="KW-0770">Synapse</keyword>
<organism>
    <name type="scientific">Mus musculus</name>
    <name type="common">Mouse</name>
    <dbReference type="NCBI Taxonomy" id="10090"/>
    <lineage>
        <taxon>Eukaryota</taxon>
        <taxon>Metazoa</taxon>
        <taxon>Chordata</taxon>
        <taxon>Craniata</taxon>
        <taxon>Vertebrata</taxon>
        <taxon>Euteleostomi</taxon>
        <taxon>Mammalia</taxon>
        <taxon>Eutheria</taxon>
        <taxon>Euarchontoglires</taxon>
        <taxon>Glires</taxon>
        <taxon>Rodentia</taxon>
        <taxon>Myomorpha</taxon>
        <taxon>Muroidea</taxon>
        <taxon>Muridae</taxon>
        <taxon>Murinae</taxon>
        <taxon>Mus</taxon>
        <taxon>Mus</taxon>
    </lineage>
</organism>
<reference key="1">
    <citation type="submission" date="1999-09" db="EMBL/GenBank/DDBJ databases">
        <title>Interaction of the Na+/Phosphate cotransporter type II with rSHANK.</title>
        <authorList>
            <person name="Dehmelt L."/>
            <person name="Nalbant P."/>
            <person name="Werner A."/>
        </authorList>
    </citation>
    <scope>NUCLEOTIDE SEQUENCE [MRNA] (ISOFORM 2)</scope>
    <source>
        <strain>C57B16/J</strain>
        <tissue>Kidney</tissue>
    </source>
</reference>
<reference key="2">
    <citation type="journal article" date="2006" name="J. Neurochem.">
        <title>Direct interaction of post-synaptic density-95/Dlg/ZO-1 domain-containing synaptic molecule Shank3 with GluR1 alpha-amino-3-hydroxy-5-methyl-4-isoxazole propionic acid receptor.</title>
        <authorList>
            <person name="Uchino S."/>
            <person name="Wada H."/>
            <person name="Honda S."/>
            <person name="Nakamura Y."/>
            <person name="Ondo Y."/>
            <person name="Uchiyama T."/>
            <person name="Tsutsumi M."/>
            <person name="Suzuki E."/>
            <person name="Hirasawa T."/>
            <person name="Kohsaka S."/>
        </authorList>
    </citation>
    <scope>NUCLEOTIDE SEQUENCE [MRNA] (ISOFORM 1)</scope>
    <scope>INTERACTION WITH GRIA1</scope>
    <scope>SUBCELLULAR LOCATION</scope>
</reference>
<reference key="3">
    <citation type="journal article" date="2014" name="J. Neurochem.">
        <title>Identification of two novel Shank3 transcripts in the developing mouse neocortex.</title>
        <authorList>
            <person name="Waga C."/>
            <person name="Asano H."/>
            <person name="Sanagi T."/>
            <person name="Suzuki E."/>
            <person name="Nakamura Y."/>
            <person name="Tsuchiya A."/>
            <person name="Itoh M."/>
            <person name="Goto Y.I."/>
            <person name="Kohsaka S."/>
            <person name="Uchino S."/>
        </authorList>
    </citation>
    <scope>NUCLEOTIDE SEQUENCE [MRNA] (ISOFORMS 3 AND 4)</scope>
    <scope>ALTERNATIVE SPLICING</scope>
    <scope>SUBCELLULAR LOCATION</scope>
    <scope>DEVELOPMENTAL STAGE</scope>
</reference>
<reference key="4">
    <citation type="journal article" date="2009" name="PLoS Biol.">
        <title>Lineage-specific biology revealed by a finished genome assembly of the mouse.</title>
        <authorList>
            <person name="Church D.M."/>
            <person name="Goodstadt L."/>
            <person name="Hillier L.W."/>
            <person name="Zody M.C."/>
            <person name="Goldstein S."/>
            <person name="She X."/>
            <person name="Bult C.J."/>
            <person name="Agarwala R."/>
            <person name="Cherry J.L."/>
            <person name="DiCuccio M."/>
            <person name="Hlavina W."/>
            <person name="Kapustin Y."/>
            <person name="Meric P."/>
            <person name="Maglott D."/>
            <person name="Birtle Z."/>
            <person name="Marques A.C."/>
            <person name="Graves T."/>
            <person name="Zhou S."/>
            <person name="Teague B."/>
            <person name="Potamousis K."/>
            <person name="Churas C."/>
            <person name="Place M."/>
            <person name="Herschleb J."/>
            <person name="Runnheim R."/>
            <person name="Forrest D."/>
            <person name="Amos-Landgraf J."/>
            <person name="Schwartz D.C."/>
            <person name="Cheng Z."/>
            <person name="Lindblad-Toh K."/>
            <person name="Eichler E.E."/>
            <person name="Ponting C.P."/>
        </authorList>
    </citation>
    <scope>NUCLEOTIDE SEQUENCE [LARGE SCALE GENOMIC DNA]</scope>
    <source>
        <strain>C57BL/6J</strain>
    </source>
</reference>
<reference key="5">
    <citation type="journal article" date="2004" name="DNA Res.">
        <title>Prediction of the coding sequences of mouse homologues of KIAA gene: IV. The complete nucleotide sequences of 500 mouse KIAA-homologous cDNAs identified by screening of terminal sequences of cDNA clones randomly sampled from size-fractionated libraries.</title>
        <authorList>
            <person name="Okazaki N."/>
            <person name="Kikuno R."/>
            <person name="Ohara R."/>
            <person name="Inamoto S."/>
            <person name="Koseki H."/>
            <person name="Hiraoka S."/>
            <person name="Saga Y."/>
            <person name="Seino S."/>
            <person name="Nishimura M."/>
            <person name="Kaisho T."/>
            <person name="Hoshino K."/>
            <person name="Kitamura H."/>
            <person name="Nagase T."/>
            <person name="Ohara O."/>
            <person name="Koga H."/>
        </authorList>
    </citation>
    <scope>NUCLEOTIDE SEQUENCE [LARGE SCALE MRNA] OF 875-1730</scope>
    <source>
        <tissue>Brain</tissue>
    </source>
</reference>
<reference key="6">
    <citation type="journal article" date="2011" name="Hum. Mol. Genet.">
        <title>Synaptic dysfunction and abnormal behaviors in mice lacking major isoforms of Shank3.</title>
        <authorList>
            <person name="Wang X."/>
            <person name="McCoy P.A."/>
            <person name="Rodriguiz R.M."/>
            <person name="Pan Y."/>
            <person name="Je H.S."/>
            <person name="Roberts A.C."/>
            <person name="Kim C.J."/>
            <person name="Berrios J."/>
            <person name="Colvin J.S."/>
            <person name="Bousquet-Moore D."/>
            <person name="Lorenzo I."/>
            <person name="Wu G."/>
            <person name="Weinberg R.J."/>
            <person name="Ehlers M.D."/>
            <person name="Philpot B.D."/>
            <person name="Beaudet A.L."/>
            <person name="Wetsel W.C."/>
            <person name="Jiang Y.H."/>
        </authorList>
    </citation>
    <scope>PARTIAL NUCLEOTIDE SEQUENCE [MRNA] (ISOFORMS 3; 6; 7; 8 AND 9)</scope>
    <scope>ALTERNATIVE SPLICING</scope>
    <scope>FUNCTION</scope>
    <scope>DISRUPTION PHENOTYPE</scope>
    <scope>TISSUE SPECIFICITY</scope>
    <scope>INTERACTION WITH HOMER1</scope>
</reference>
<reference key="7">
    <citation type="journal article" date="2006" name="Mol. Cell. Proteomics">
        <title>Comprehensive identification of phosphorylation sites in postsynaptic density preparations.</title>
        <authorList>
            <person name="Trinidad J.C."/>
            <person name="Specht C.G."/>
            <person name="Thalhammer A."/>
            <person name="Schoepfer R."/>
            <person name="Burlingame A.L."/>
        </authorList>
    </citation>
    <scope>PHOSPHORYLATION [LARGE SCALE ANALYSIS] AT SER-482</scope>
    <scope>IDENTIFICATION BY MASS SPECTROMETRY [LARGE SCALE ANALYSIS]</scope>
    <source>
        <tissue>Brain</tissue>
    </source>
</reference>
<reference key="8">
    <citation type="journal article" date="2007" name="Proc. Natl. Acad. Sci. U.S.A.">
        <title>Large-scale phosphorylation analysis of mouse liver.</title>
        <authorList>
            <person name="Villen J."/>
            <person name="Beausoleil S.A."/>
            <person name="Gerber S.A."/>
            <person name="Gygi S.P."/>
        </authorList>
    </citation>
    <scope>PHOSPHORYLATION [LARGE SCALE ANALYSIS] AT SER-1634</scope>
    <scope>IDENTIFICATION BY MASS SPECTROMETRY [LARGE SCALE ANALYSIS]</scope>
    <source>
        <tissue>Liver</tissue>
    </source>
</reference>
<reference key="9">
    <citation type="journal article" date="2008" name="J. Proteome Res.">
        <title>Large-scale identification and evolution indexing of tyrosine phosphorylation sites from murine brain.</title>
        <authorList>
            <person name="Ballif B.A."/>
            <person name="Carey G.R."/>
            <person name="Sunyaev S.R."/>
            <person name="Gygi S.P."/>
        </authorList>
    </citation>
    <scope>PHOSPHORYLATION [LARGE SCALE ANALYSIS] AT TYR-122 AND TYR-555</scope>
    <scope>IDENTIFICATION BY MASS SPECTROMETRY [LARGE SCALE ANALYSIS]</scope>
    <source>
        <tissue>Brain</tissue>
    </source>
</reference>
<reference key="10">
    <citation type="journal article" date="2010" name="Cell">
        <title>A tissue-specific atlas of mouse protein phosphorylation and expression.</title>
        <authorList>
            <person name="Huttlin E.L."/>
            <person name="Jedrychowski M.P."/>
            <person name="Elias J.E."/>
            <person name="Goswami T."/>
            <person name="Rad R."/>
            <person name="Beausoleil S.A."/>
            <person name="Villen J."/>
            <person name="Haas W."/>
            <person name="Sowa M.E."/>
            <person name="Gygi S.P."/>
        </authorList>
    </citation>
    <scope>PHOSPHORYLATION [LARGE SCALE ANALYSIS] AT SER-373; SER-375; SER-387; SER-694; SER-781; SER-790; SER-801; SER-890; SER-897; SER-995; THR-1130; SER-1134; SER-1159; SER-1166; THR-1234; SER-1510; SER-1521; SER-1529; SER-1539; SER-1634 AND SER-1636</scope>
    <scope>IDENTIFICATION BY MASS SPECTROMETRY [LARGE SCALE ANALYSIS]</scope>
    <source>
        <tissue>Brain</tissue>
        <tissue>Brown adipose tissue</tissue>
        <tissue>Heart</tissue>
        <tissue>Kidney</tissue>
        <tissue>Liver</tissue>
        <tissue>Lung</tissue>
        <tissue>Pancreas</tissue>
        <tissue>Spleen</tissue>
        <tissue>Testis</tissue>
    </source>
</reference>
<reference key="11">
    <citation type="journal article" date="2010" name="Nature">
        <title>Conserved role of intragenic DNA methylation in regulating alternative promoters.</title>
        <authorList>
            <person name="Maunakea A.K."/>
            <person name="Nagarajan R.P."/>
            <person name="Bilenky M."/>
            <person name="Ballinger T.J."/>
            <person name="D'Souza C."/>
            <person name="Fouse S.D."/>
            <person name="Johnson B.E."/>
            <person name="Hong C."/>
            <person name="Nielsen C."/>
            <person name="Zhao Y."/>
            <person name="Turecki G."/>
            <person name="Delaney A."/>
            <person name="Varhol R."/>
            <person name="Thiessen N."/>
            <person name="Shchors K."/>
            <person name="Heine V.M."/>
            <person name="Rowitch D.H."/>
            <person name="Xing X."/>
            <person name="Fiore C."/>
            <person name="Schillebeeckx M."/>
            <person name="Jones S.J."/>
            <person name="Haussler D."/>
            <person name="Marra M.A."/>
            <person name="Hirst M."/>
            <person name="Wang T."/>
            <person name="Costello J.F."/>
        </authorList>
    </citation>
    <scope>ALTERNATIVE PROMOTER USAGE</scope>
</reference>
<reference key="12">
    <citation type="journal article" date="2011" name="Nature">
        <title>Shank3 mutant mice display autistic-like behaviours and striatal dysfunction.</title>
        <authorList>
            <person name="Peca J."/>
            <person name="Feliciano C."/>
            <person name="Ting J.T."/>
            <person name="Wang W."/>
            <person name="Wells M.F."/>
            <person name="Venkatraman T.N."/>
            <person name="Lascola C.D."/>
            <person name="Fu Z."/>
            <person name="Feng G."/>
        </authorList>
    </citation>
    <scope>FUNCTION</scope>
    <scope>DISRUPTION PHENOTYPE</scope>
    <scope>TISSUE SPECIFICITY</scope>
</reference>
<reference key="13">
    <citation type="journal article" date="2012" name="Nature">
        <title>Autistic-like behaviours and hyperactivity in mice lacking ProSAP1/Shank2.</title>
        <authorList>
            <person name="Schmeisser M.J."/>
            <person name="Ey E."/>
            <person name="Wegener S."/>
            <person name="Bockmann J."/>
            <person name="Stempel A.V."/>
            <person name="Kuebler A."/>
            <person name="Janssen A.L."/>
            <person name="Udvardi P.T."/>
            <person name="Shiban E."/>
            <person name="Spilker C."/>
            <person name="Balschun D."/>
            <person name="Skryabin B.V."/>
            <person name="Dieck S.T."/>
            <person name="Smalla K.H."/>
            <person name="Montag D."/>
            <person name="Leblond C.S."/>
            <person name="Faure P."/>
            <person name="Torquet N."/>
            <person name="Le Sourd A.M."/>
            <person name="Toro R."/>
            <person name="Grabrucker A.M."/>
            <person name="Shoichet S.A."/>
            <person name="Schmitz D."/>
            <person name="Kreutz M.R."/>
            <person name="Bourgeron T."/>
            <person name="Gundelfinger E.D."/>
            <person name="Boeckers T.M."/>
        </authorList>
    </citation>
    <scope>DISRUPTION PHENOTYPE</scope>
</reference>
<reference key="14">
    <citation type="journal article" date="2013" name="J. Neurosci.">
        <title>Shank3-Rich2 interaction regulates AMPA receptor recycling and synaptic long-term potentiation.</title>
        <authorList>
            <person name="Raynaud F."/>
            <person name="Janossy A."/>
            <person name="Dahl J."/>
            <person name="Bertaso F."/>
            <person name="Perroy J."/>
            <person name="Varrault A."/>
            <person name="Vidal M."/>
            <person name="Worley P.F."/>
            <person name="Boeckers T.M."/>
            <person name="Bockaert J."/>
            <person name="Marin P."/>
            <person name="Fagni L."/>
            <person name="Homburger V."/>
        </authorList>
    </citation>
    <scope>FUNCTION IN AMPA RECEPTOR SIGNALING</scope>
    <scope>INTERACTION WITH ARHGAP44</scope>
</reference>
<reference key="15">
    <citation type="journal article" date="2013" name="J. Neurosci.">
        <title>Loss of predominant shank3 isoforms results in hippocampus-dependent impairments in behavior and synaptic transmission.</title>
        <authorList>
            <person name="Kouser M."/>
            <person name="Speed H.E."/>
            <person name="Dewey C.M."/>
            <person name="Reimers J.M."/>
            <person name="Widman A.J."/>
            <person name="Gupta N."/>
            <person name="Liu S."/>
            <person name="Jaramillo T.C."/>
            <person name="Bangash M."/>
            <person name="Xiao B."/>
            <person name="Worley P.F."/>
            <person name="Powell C.M."/>
        </authorList>
    </citation>
    <scope>DISRUPTION PHENOTYPE</scope>
</reference>
<reference key="16">
    <citation type="journal article" date="2013" name="Nature">
        <title>SHANK3 overexpression causes manic-like behaviour with unique pharmacogenetic properties.</title>
        <authorList>
            <person name="Han K."/>
            <person name="Holder J.L. Jr."/>
            <person name="Schaaf C.P."/>
            <person name="Lu H."/>
            <person name="Chen H."/>
            <person name="Kang H."/>
            <person name="Tang J."/>
            <person name="Wu Z."/>
            <person name="Hao S."/>
            <person name="Cheung S.W."/>
            <person name="Yu P."/>
            <person name="Sun H."/>
            <person name="Breman A.M."/>
            <person name="Patel A."/>
            <person name="Lu H.C."/>
            <person name="Zoghbi H.Y."/>
        </authorList>
    </citation>
    <scope>FUNCTION</scope>
    <scope>TISSUE SPECIFICITY</scope>
    <scope>SUBCELLULAR LOCATION</scope>
    <scope>ACTIN-BINDING</scope>
    <scope>INTERACTION WITH ARPC2; CYFIP2; DLG4; GKAP1; HOMER1 AND SLC17A7</scope>
</reference>
<reference key="17">
    <citation type="journal article" date="2014" name="Mol. Cell. Proteomics">
        <title>Immunoaffinity enrichment and mass spectrometry analysis of protein methylation.</title>
        <authorList>
            <person name="Guo A."/>
            <person name="Gu H."/>
            <person name="Zhou J."/>
            <person name="Mulhern D."/>
            <person name="Wang Y."/>
            <person name="Lee K.A."/>
            <person name="Yang V."/>
            <person name="Aguiar M."/>
            <person name="Kornhauser J."/>
            <person name="Jia X."/>
            <person name="Ren J."/>
            <person name="Beausoleil S.A."/>
            <person name="Silva J.C."/>
            <person name="Vemulapalli V."/>
            <person name="Bedford M.T."/>
            <person name="Comb M.J."/>
        </authorList>
    </citation>
    <scope>METHYLATION [LARGE SCALE ANALYSIS] AT ARG-965</scope>
    <scope>IDENTIFICATION BY MASS SPECTROMETRY [LARGE SCALE ANALYSIS]</scope>
    <source>
        <tissue>Brain</tissue>
    </source>
</reference>
<reference key="18">
    <citation type="journal article" date="2019" name="PLoS Biol.">
        <title>Autism candidate gene DIP2A regulates spine morphogenesis via acetylation of cortactin.</title>
        <authorList>
            <person name="Ma J."/>
            <person name="Zhang L.Q."/>
            <person name="He Z.X."/>
            <person name="He X.X."/>
            <person name="Wang Y.J."/>
            <person name="Jian Y.L."/>
            <person name="Wang X."/>
            <person name="Zhang B.B."/>
            <person name="Su C."/>
            <person name="Lu J."/>
            <person name="Huang B.Q."/>
            <person name="Zhang Y."/>
            <person name="Wang G.Y."/>
            <person name="Guo W.X."/>
            <person name="Qiu D.L."/>
            <person name="Mei L."/>
            <person name="Xiong W.C."/>
            <person name="Zheng Y.W."/>
            <person name="Zhu X.J."/>
        </authorList>
    </citation>
    <scope>INTERACTION WITH DIP2A</scope>
</reference>
<reference key="19">
    <citation type="journal article" date="2024" name="Nature">
        <title>Alternative splicing of latrophilin-3 controls synapse formation.</title>
        <authorList>
            <person name="Wang S."/>
            <person name="DeLeon C."/>
            <person name="Sun W."/>
            <person name="Quake S.R."/>
            <person name="Roth B.L."/>
            <person name="Suedhof T.C."/>
        </authorList>
    </citation>
    <scope>INTERACTION WITH ADGRL3</scope>
</reference>
<gene>
    <name type="primary">Shank3</name>
    <name type="synonym">Kiaa1650</name>
    <name type="synonym">Prosap2</name>
</gene>
<accession>Q4ACU6</accession>
<accession>F8S0X0</accession>
<accession>F8S0X2</accession>
<accession>F8S0X3</accession>
<accession>F8S0X5</accession>
<accession>F8S0X6</accession>
<accession>Q69ZD8</accession>
<accession>Q9JJZ3</accession>
<accession>S6BMD3</accession>
<accession>S6CCV8</accession>
<evidence type="ECO:0000250" key="1"/>
<evidence type="ECO:0000250" key="2">
    <source>
        <dbReference type="UniProtKB" id="Q9BYB0"/>
    </source>
</evidence>
<evidence type="ECO:0000250" key="3">
    <source>
        <dbReference type="UniProtKB" id="Q9JLU4"/>
    </source>
</evidence>
<evidence type="ECO:0000255" key="4"/>
<evidence type="ECO:0000255" key="5">
    <source>
        <dbReference type="PROSITE-ProRule" id="PRU00143"/>
    </source>
</evidence>
<evidence type="ECO:0000255" key="6">
    <source>
        <dbReference type="PROSITE-ProRule" id="PRU00184"/>
    </source>
</evidence>
<evidence type="ECO:0000255" key="7">
    <source>
        <dbReference type="PROSITE-ProRule" id="PRU00192"/>
    </source>
</evidence>
<evidence type="ECO:0000256" key="8">
    <source>
        <dbReference type="SAM" id="MobiDB-lite"/>
    </source>
</evidence>
<evidence type="ECO:0000269" key="9">
    <source>
    </source>
</evidence>
<evidence type="ECO:0000269" key="10">
    <source>
    </source>
</evidence>
<evidence type="ECO:0000269" key="11">
    <source>
    </source>
</evidence>
<evidence type="ECO:0000269" key="12">
    <source>
    </source>
</evidence>
<evidence type="ECO:0000269" key="13">
    <source>
    </source>
</evidence>
<evidence type="ECO:0000269" key="14">
    <source>
    </source>
</evidence>
<evidence type="ECO:0000269" key="15">
    <source>
    </source>
</evidence>
<evidence type="ECO:0000269" key="16">
    <source>
    </source>
</evidence>
<evidence type="ECO:0000269" key="17">
    <source>
    </source>
</evidence>
<evidence type="ECO:0000269" key="18">
    <source>
    </source>
</evidence>
<evidence type="ECO:0000303" key="19">
    <source>
    </source>
</evidence>
<evidence type="ECO:0000303" key="20">
    <source ref="1"/>
</evidence>
<evidence type="ECO:0000305" key="21"/>
<evidence type="ECO:0007744" key="22">
    <source>
    </source>
</evidence>
<evidence type="ECO:0007744" key="23">
    <source>
    </source>
</evidence>
<evidence type="ECO:0007744" key="24">
    <source>
    </source>
</evidence>
<evidence type="ECO:0007744" key="25">
    <source>
    </source>
</evidence>
<evidence type="ECO:0007744" key="26">
    <source>
    </source>
</evidence>
<evidence type="ECO:0007829" key="27">
    <source>
        <dbReference type="PDB" id="3O5N"/>
    </source>
</evidence>
<evidence type="ECO:0007829" key="28">
    <source>
        <dbReference type="PDB" id="5IZU"/>
    </source>
</evidence>
<evidence type="ECO:0007829" key="29">
    <source>
        <dbReference type="PDB" id="6KYH"/>
    </source>
</evidence>
<evidence type="ECO:0007829" key="30">
    <source>
        <dbReference type="PDB" id="6KYK"/>
    </source>
</evidence>
<sequence length="1730" mass="185397">MDGPGASAVVVRVGIPDLQQTKCLRLDPTAPVWAAKQRVLCALNHSLQDALNYGLFQPPSRGRAGKFLDEERLLQDYPPNLDTPLPYLEFRYKRRVYAQNLIDDKQFAKLHTKANLKKFMDYVQLHSTDKVARLLDKGLDPNFHDPDSGECPLSLAAQLDNATDLLKVLRNGGAHLDFRTRDGLTAVHCATRQRNAGALTTLLDLGASPDYKDSRGLTPLYHSALGGGDALCCELLLHDHAQLGTTDENGWQEIHQACRFGHVQHLEHLLFYGANMGAQNASGNTALHICALYNQESCARVLLFRGANKDVRNYNSQTAFQVAIIAGNFELAEVIKTHKDSDVVPFRETPSYAKRRRLAGPSGLASPRPLQRSASDINLKGDQPAASPGPTLRSLPHQLLLQRLQEEKDRDRDGELENDISGPSAGRGGHNKISPSGPGGSGPAPGPGPASPAPPAPPPRGPKRKLYSAVPGRKFIAVKAHSPQGEGEIPLHRGEAVKVLSIGEGGFWEGTVKGRTGWFPADCVEEVQMRQYDTRHETREDRTKRLFRHYTVGSYDSLTSHSDYVIDDKVAILQKRDHEGFGFVLRGAKAETPIEEFTPTPAFPALQYLESVDVEGVAWRAGLRTGDFLIEVNGVNVVKVGHKQVVGLIRQGGNRLVMKVVSVTRKPEEDGARRRAPPPPKRAPSTTLTLRSKSMTAELEELASIRRRKGEKLDEILAVAAEPTLRPDIADADSRAATVKQRPTSRRITPAEISSLFERQGLPGPEKLPGSLRKGIPRTKSVGEDEKLASLLEGRFPRSTSMQDTVREGRGIPPPPQTAPPPPPAPYYFDSGPPPTFSPPPPPGRAYDTVRSSFKPGLEARLGAGAAGLYDPSTPLGPLPYPERQKRARSMIILQDSAPEVGDVPRPAPAATPPERPKRRPRPSGPDSPYANLGAFSASLFAPSKPQRRKSPLVKQLQVEDAQERAALAVGSPGPVGGSFAREPSPTHRGPRPGSLDYSSGEGLGLTFGGPSPGPVKERRLEERRRSTVFLSVGAIEGSPPSADLPSLQPSRSIDERLLGTGATTGRDLLLPSPVSALKPLVGGPSLGPSGSTFIHPLTGKPLDPSSPLALALAARERALASQTPSRSPTPVHSPDADRPGPLFVDVQTRDSERGPLASPAFSPRSPAWIPVPARREAEKPPREERKSPEDKKSMILSVLDTSLQRPAGLIVVHATSNGQEPSRLGAEEERPGTPELAPAPMQAAAVAEPMPSPRAQPPGSIPADPGPGQGSSEEEPELVFAVNLPPAQLSSSDEETREELARIGLVPPPEEFANGILLTTPPPGPGPLPTTVPSPASGKPSSELPPAPESAADSGVEEADTRSSSDPHLETTSTISTVSSMSTLSSESGELTDTHTSFADGHTFLLEKPPVPPKPKLKSPLGKGPVTFRDPLLKQSSDSELMAQQHHAASTGLASAAGPARPRYLFQRRSKLWGDPVESRGLPGPEDDKPTVISELSSRLQQLNKDTRSLGEEPVGGLGSLLDPAKKSPIAAARLFSSLGELSTISAQRSPGGPGGGASYSVRPSGRYPVARRAPSPVKPASLERVEGLGAGVGGAGRPFGLTPPTILKSSSLSIPHEPKEVRFVVRSVSARSRSPSPSPLPSPSPGSGPSAGPRRPFQQKPLQLWSKFDVGDWLESIHLGEHRDRFEDHEIEGAHLPALTKEDFVELGVTRVGHRMNIERALRQLDGS</sequence>
<feature type="chain" id="PRO_0000291257" description="SH3 and multiple ankyrin repeat domains protein 3">
    <location>
        <begin position="1"/>
        <end position="1730"/>
    </location>
</feature>
<feature type="repeat" description="ANK 1">
    <location>
        <begin position="148"/>
        <end position="178"/>
    </location>
</feature>
<feature type="repeat" description="ANK 2">
    <location>
        <begin position="182"/>
        <end position="211"/>
    </location>
</feature>
<feature type="repeat" description="ANK 3">
    <location>
        <begin position="215"/>
        <end position="245"/>
    </location>
</feature>
<feature type="repeat" description="ANK 4">
    <location>
        <begin position="249"/>
        <end position="278"/>
    </location>
</feature>
<feature type="repeat" description="ANK 5">
    <location>
        <begin position="282"/>
        <end position="311"/>
    </location>
</feature>
<feature type="repeat" description="ANK 6">
    <location>
        <begin position="315"/>
        <end position="345"/>
    </location>
</feature>
<feature type="domain" description="SH3" evidence="7">
    <location>
        <begin position="470"/>
        <end position="529"/>
    </location>
</feature>
<feature type="domain" description="PDZ" evidence="5">
    <location>
        <begin position="570"/>
        <end position="664"/>
    </location>
</feature>
<feature type="domain" description="SAM" evidence="6">
    <location>
        <begin position="1667"/>
        <end position="1730"/>
    </location>
</feature>
<feature type="region of interest" description="Intramolecular interaction with the ANK repeats" evidence="1">
    <location>
        <begin position="1"/>
        <end position="75"/>
    </location>
</feature>
<feature type="region of interest" description="Disordered" evidence="8">
    <location>
        <begin position="354"/>
        <end position="466"/>
    </location>
</feature>
<feature type="region of interest" description="Disordered" evidence="8">
    <location>
        <begin position="664"/>
        <end position="688"/>
    </location>
</feature>
<feature type="region of interest" description="Required for interaction with ABI1" evidence="1">
    <location>
        <begin position="677"/>
        <end position="684"/>
    </location>
</feature>
<feature type="region of interest" description="Disordered" evidence="8">
    <location>
        <begin position="760"/>
        <end position="1460"/>
    </location>
</feature>
<feature type="region of interest" description="Disordered" evidence="8">
    <location>
        <begin position="1475"/>
        <end position="1524"/>
    </location>
</feature>
<feature type="region of interest" description="Disordered" evidence="8">
    <location>
        <begin position="1546"/>
        <end position="1584"/>
    </location>
</feature>
<feature type="region of interest" description="Disordered" evidence="8">
    <location>
        <begin position="1627"/>
        <end position="1663"/>
    </location>
</feature>
<feature type="coiled-coil region" evidence="4">
    <location>
        <begin position="1494"/>
        <end position="1514"/>
    </location>
</feature>
<feature type="short sequence motif" description="SH3-binding" evidence="4">
    <location>
        <begin position="1410"/>
        <end position="1416"/>
    </location>
</feature>
<feature type="compositionally biased region" description="Basic and acidic residues" evidence="8">
    <location>
        <begin position="404"/>
        <end position="415"/>
    </location>
</feature>
<feature type="compositionally biased region" description="Pro residues" evidence="8">
    <location>
        <begin position="444"/>
        <end position="460"/>
    </location>
</feature>
<feature type="compositionally biased region" description="Pro residues" evidence="8">
    <location>
        <begin position="812"/>
        <end position="844"/>
    </location>
</feature>
<feature type="compositionally biased region" description="Low complexity" evidence="8">
    <location>
        <begin position="857"/>
        <end position="869"/>
    </location>
</feature>
<feature type="compositionally biased region" description="Basic and acidic residues" evidence="8">
    <location>
        <begin position="1016"/>
        <end position="1026"/>
    </location>
</feature>
<feature type="compositionally biased region" description="Low complexity" evidence="8">
    <location>
        <begin position="1078"/>
        <end position="1092"/>
    </location>
</feature>
<feature type="compositionally biased region" description="Polar residues" evidence="8">
    <location>
        <begin position="1122"/>
        <end position="1131"/>
    </location>
</feature>
<feature type="compositionally biased region" description="Basic and acidic residues" evidence="8">
    <location>
        <begin position="1174"/>
        <end position="1194"/>
    </location>
</feature>
<feature type="compositionally biased region" description="Low complexity" evidence="8">
    <location>
        <begin position="1235"/>
        <end position="1250"/>
    </location>
</feature>
<feature type="compositionally biased region" description="Pro residues" evidence="8">
    <location>
        <begin position="1251"/>
        <end position="1261"/>
    </location>
</feature>
<feature type="compositionally biased region" description="Pro residues" evidence="8">
    <location>
        <begin position="1321"/>
        <end position="1333"/>
    </location>
</feature>
<feature type="compositionally biased region" description="Basic and acidic residues" evidence="8">
    <location>
        <begin position="1360"/>
        <end position="1370"/>
    </location>
</feature>
<feature type="compositionally biased region" description="Low complexity" evidence="8">
    <location>
        <begin position="1371"/>
        <end position="1392"/>
    </location>
</feature>
<feature type="compositionally biased region" description="Polar residues" evidence="8">
    <location>
        <begin position="1495"/>
        <end position="1505"/>
    </location>
</feature>
<feature type="compositionally biased region" description="Low complexity" evidence="8">
    <location>
        <begin position="1627"/>
        <end position="1637"/>
    </location>
</feature>
<feature type="compositionally biased region" description="Pro residues" evidence="8">
    <location>
        <begin position="1638"/>
        <end position="1648"/>
    </location>
</feature>
<feature type="compositionally biased region" description="Low complexity" evidence="8">
    <location>
        <begin position="1649"/>
        <end position="1658"/>
    </location>
</feature>
<feature type="modified residue" description="Phosphotyrosine" evidence="24">
    <location>
        <position position="122"/>
    </location>
</feature>
<feature type="modified residue" description="Phosphoserine" evidence="25">
    <location>
        <position position="373"/>
    </location>
</feature>
<feature type="modified residue" description="Phosphoserine" evidence="25">
    <location>
        <position position="375"/>
    </location>
</feature>
<feature type="modified residue" description="Phosphoserine" evidence="25">
    <location>
        <position position="387"/>
    </location>
</feature>
<feature type="modified residue" description="Phosphoserine" evidence="3">
    <location>
        <position position="394"/>
    </location>
</feature>
<feature type="modified residue" description="Phosphoserine" evidence="22">
    <location>
        <position position="482"/>
    </location>
</feature>
<feature type="modified residue" description="Phosphotyrosine" evidence="24">
    <location>
        <position position="555"/>
    </location>
</feature>
<feature type="modified residue" description="Phosphoserine" evidence="25">
    <location>
        <position position="694"/>
    </location>
</feature>
<feature type="modified residue" description="Phosphoserine" evidence="25">
    <location>
        <position position="781"/>
    </location>
</feature>
<feature type="modified residue" description="Phosphoserine" evidence="25">
    <location>
        <position position="790"/>
    </location>
</feature>
<feature type="modified residue" description="Phosphoserine" evidence="25">
    <location>
        <position position="801"/>
    </location>
</feature>
<feature type="modified residue" description="Phosphoserine" evidence="25">
    <location>
        <position position="890"/>
    </location>
</feature>
<feature type="modified residue" description="Phosphoserine" evidence="25">
    <location>
        <position position="897"/>
    </location>
</feature>
<feature type="modified residue" description="Phosphothreonine" evidence="2">
    <location>
        <position position="912"/>
    </location>
</feature>
<feature type="modified residue" description="Phosphotyrosine" evidence="3">
    <location>
        <position position="930"/>
    </location>
</feature>
<feature type="modified residue" description="Asymmetric dimethylarginine" evidence="26">
    <location>
        <position position="965"/>
    </location>
</feature>
<feature type="modified residue" description="Phosphoserine" evidence="25">
    <location>
        <position position="995"/>
    </location>
</feature>
<feature type="modified residue" description="Phosphothreonine" evidence="25">
    <location>
        <position position="1130"/>
    </location>
</feature>
<feature type="modified residue" description="Phosphoserine" evidence="25">
    <location>
        <position position="1134"/>
    </location>
</feature>
<feature type="modified residue" description="Phosphoserine" evidence="25">
    <location>
        <position position="1159"/>
    </location>
</feature>
<feature type="modified residue" description="Phosphoserine" evidence="2">
    <location>
        <position position="1163"/>
    </location>
</feature>
<feature type="modified residue" description="Phosphoserine" evidence="25">
    <location>
        <position position="1166"/>
    </location>
</feature>
<feature type="modified residue" description="Phosphothreonine" evidence="25">
    <location>
        <position position="1234"/>
    </location>
</feature>
<feature type="modified residue" description="Phosphoserine" evidence="2">
    <location>
        <position position="1253"/>
    </location>
</feature>
<feature type="modified residue" description="Phosphoserine" evidence="3">
    <location>
        <position position="1420"/>
    </location>
</feature>
<feature type="modified residue" description="Phosphoserine" evidence="25">
    <location>
        <position position="1510"/>
    </location>
</feature>
<feature type="modified residue" description="Phosphoserine" evidence="25">
    <location>
        <position position="1521"/>
    </location>
</feature>
<feature type="modified residue" description="Phosphoserine" evidence="25">
    <location>
        <position position="1529"/>
    </location>
</feature>
<feature type="modified residue" description="Phosphoserine" evidence="25">
    <location>
        <position position="1539"/>
    </location>
</feature>
<feature type="modified residue" description="Phosphoserine" evidence="23 25">
    <location>
        <position position="1634"/>
    </location>
</feature>
<feature type="modified residue" description="Phosphoserine" evidence="25">
    <location>
        <position position="1636"/>
    </location>
</feature>
<feature type="modified residue" description="Phosphoserine" evidence="2">
    <location>
        <position position="1638"/>
    </location>
</feature>
<feature type="splice variant" id="VSP_053606" description="In isoform 10." evidence="21">
    <location>
        <begin position="1"/>
        <end position="890"/>
    </location>
</feature>
<feature type="splice variant" id="VSP_053607" description="In isoform 8 and isoform 9." evidence="21">
    <original>MDGPGASAVVVRVGIPDLQQTKCLRLDPTAPVWAAKQRVLCALNHSLQDALNYGLFQPPSRGRAGKFLDEERLLQDYPPNLDTPLPYLEFRYKRRVYAQNLIDDKQFAKLHTKANLKKFMDYVQLHSTDKVARLLDKGLDPNFHDPDSGECPLSLAAQLDNATDLLKVLRNGGAHLDFRTRDGLTAVHCATRQRNAGALTTLLDLGASPDYKDSRGLTPLYHSALGGGDALCCELLLHDHAQLGTTDENGWQEIHQACRFGHVQHLEHLLFYGANMGAQNASGNTALHICALYNQESCARVLLFRGANKDVRNYNSQTAFQVAIIAGNFELAEVIKTHKDSDVVPFRETPSYAKRRRLAGPSGLASPRPLQRSASDINLKGDQPAASPGPTLRSLPHQLLLQRLQEEKDRDRDGELENDISGPSAGRGGHNKISPSGPGGSGPAPGPGPASPAPPAPPPRGPKRKLYSAVPGRKFIAVKAHSPQGEGEIPLHRGEAVKVLSIGEGGFWEGTVKGRTGWFPADCVEEVQMRQYDTRHETREDRTKRLFRHYTVGSYDSLTSHSDYVIDDKVAILQKRDHEGFGFVLRGAKAETPIEEFTPTPAFPALQYLESVDVEGVAWRAGLRTGDFLIEVNGVNVVKVGHKQVVGLIRQGGNRLVMKVVSVTRKPEEDGARRR</original>
    <variation>MKKFASSRSLNKILAQCDSSSREYEEVQAVERKWHLHLATPRRLLLDRRAKASLFFA</variation>
    <location>
        <begin position="1"/>
        <end position="675"/>
    </location>
</feature>
<feature type="splice variant" id="VSP_053608" description="In isoform 7." evidence="21">
    <original>MDGPGASAVVVRVGIPDLQQTKCLRLDPTAPVWAAKQRVLCALNHSLQDALNYGLFQPPSRGRAGKFLDEERLLQDYPPNLDTPLPYLEFRYKRRVYAQNLIDDKQFAKLHTKANLKKFMDYVQLHSTDKVARLLDKGLDPNFHDPDSGECPLSLAAQLDNATDLLKVLRNGGAHLDFRTRDGLTAVHCATRQRNAGALTTLLDLGASPDYKDSRGLTPLYHSALGGGDALCCELLLHDHAQLGTTDENGWQEIHQACRFGHVQHLEHLLFYGANMGAQNASGNTALHICALYNQESCARVLLFRGANKDVRNYNSQTAFQVAIIAGNFELAEVIKTHKDSDVVPFRETPSYAKRRRLAGPSGLASPRPLQRSASDINLKGDQPAASPGPTLRSLPHQLLLQRLQEEKDRDRDGELENDISGPSAGRGGHNKISPSGPGGSGPAPGPGPASPAPPAPPPRGPKRKLYSAVPGRKFIAVKAHSPQGEGEIPLHRGEAVKVLSIGEGGFWEGTVKGRTGWFPADCVEEVQMRQYDTRHETREDRTKRLFRHYTVGSYDSLTSHSDYVIDDKVAILQKRDHEGFGFVLRGAK</original>
    <variation>MLVNAFYLALPA</variation>
    <location>
        <begin position="1"/>
        <end position="589"/>
    </location>
</feature>
<feature type="splice variant" id="VSP_053609" description="In isoform 6." evidence="21">
    <original>MDGPGASAVVVRVGIPDLQQTKCLRLDPTAPVWAAKQRVLCALNHSLQDALNYGLFQPPSRGRAGKFLDEERLLQDYPPNLDTPLPYLEFRYKRRVYAQNLIDDKQFAKLHTKANLKKFMDYVQLHSTDKVARLLDKGLDPNFHDPDSGECPLSLAAQLDNATDLLKVLRNGGAHLDFRTRDGLTAVHCATRQRNAGALTTLLDLGASPDYKDSRGLTPLYHSALGGGDALCCELLLHDHAQLGTTDENGWQEIHQACRFGHVQHLEHLLFYGANMGAQNASGNTALHICALYNQESCARVLLFRGANKDVRNYNSQTAFQVAIIAGNFELAEVIKTHKDSDVVPFRETPSYAKRRRLAGPSGLASPRPLQRSASDINLKGDQPAASPGPTLRSLPHQLLLQRLQEEKDRDRDGELENDISGPSAGRGGHNKISPSGPGGSGPAPGPGPASPAPPAPPPRGPKRKLYSAVPGRKFIAVKAHSPQGEGEIPLHRGEAVKVLSIGEGGFWEGTVKGRTGWFPADCVEEVQMRQYDTRH</original>
    <variation>MLPA</variation>
    <location>
        <begin position="1"/>
        <end position="536"/>
    </location>
</feature>
<feature type="splice variant" id="VSP_053610" description="In isoform 3." evidence="19">
    <location>
        <begin position="1"/>
        <end position="528"/>
    </location>
</feature>
<feature type="splice variant" id="VSP_053611" description="In isoform 4 and isoform 5." evidence="19">
    <original>MDGPGASAVVVRVGIPDLQQTKCLRLDPTAPVWAAKQRVLCALNHSLQDALNYGLFQPPSRGRAGKFLDEERLLQDYPPNLDTPLPYLEFRYKRRVYAQNLIDDKQFAKLHTKANLKKFMDYVQLHSTDKVARLLDKGLDPNFHDPDSGECPLSLAAQLDNATDLLKVLRNGGAHLDFRTRDGLTAVHCATRQRNAGALTTLLDLGASPDYKDSRGLTPLYHSALGGGDALCCELLLHDHAQLGTTDENGWQEIHQACRFGHVQHLEHLLFYGANMGAQNASGNTALHICALYNQESCARVLLFRGANKDVRNYNSQTAFQVAIIAGNFELAEVIKTHKDSDVVPFRETPSYAKRRRLAGPSGLASPRPLQRSASDINLKGDQPAASPGPTLRSLPHQLLLQRLQEEKDRDRDGELENDISGPSAGRGGHNKI</original>
    <variation>MEAPGAGFACPLPPGIASVTYVFVY</variation>
    <location>
        <begin position="1"/>
        <end position="433"/>
    </location>
</feature>
<feature type="splice variant" id="VSP_053612" description="In isoform 2." evidence="20">
    <original>MDGPGASAVVVRVGIPDLQQTKCLRLDPTAPVWAAKQRVLCALNHSLQDALNYGLFQPPSRGRAGKFLDEERLLQDYPPNLDTPLPYLE</original>
    <variation>MGLCGSLLPTFSLSEQ</variation>
    <location>
        <begin position="1"/>
        <end position="89"/>
    </location>
</feature>
<feature type="splice variant" id="VSP_053613" description="In isoform 2 and isoform 9." evidence="20">
    <location>
        <begin position="703"/>
        <end position="710"/>
    </location>
</feature>
<feature type="splice variant" id="VSP_053614" description="In isoform 2 and isoform 5." evidence="20">
    <original>EDEKLAS</original>
    <variation>SSAASVS</variation>
    <location>
        <begin position="784"/>
        <end position="790"/>
    </location>
</feature>
<feature type="splice variant" id="VSP_053615" description="In isoform 2 and isoform 5." evidence="20">
    <location>
        <begin position="791"/>
        <end position="1730"/>
    </location>
</feature>
<feature type="strand" evidence="30">
    <location>
        <begin position="9"/>
        <end position="15"/>
    </location>
</feature>
<feature type="turn" evidence="30">
    <location>
        <begin position="16"/>
        <end position="19"/>
    </location>
</feature>
<feature type="strand" evidence="30">
    <location>
        <begin position="20"/>
        <end position="26"/>
    </location>
</feature>
<feature type="strand" evidence="30">
    <location>
        <begin position="28"/>
        <end position="31"/>
    </location>
</feature>
<feature type="helix" evidence="30">
    <location>
        <begin position="32"/>
        <end position="42"/>
    </location>
</feature>
<feature type="turn" evidence="30">
    <location>
        <begin position="43"/>
        <end position="45"/>
    </location>
</feature>
<feature type="helix" evidence="30">
    <location>
        <begin position="50"/>
        <end position="52"/>
    </location>
</feature>
<feature type="strand" evidence="30">
    <location>
        <begin position="53"/>
        <end position="57"/>
    </location>
</feature>
<feature type="strand" evidence="29">
    <location>
        <begin position="70"/>
        <end position="73"/>
    </location>
</feature>
<feature type="helix" evidence="30">
    <location>
        <begin position="74"/>
        <end position="76"/>
    </location>
</feature>
<feature type="strand" evidence="30">
    <location>
        <begin position="81"/>
        <end position="85"/>
    </location>
</feature>
<feature type="strand" evidence="30">
    <location>
        <begin position="87"/>
        <end position="92"/>
    </location>
</feature>
<feature type="helix" evidence="30">
    <location>
        <begin position="104"/>
        <end position="110"/>
    </location>
</feature>
<feature type="helix" evidence="30">
    <location>
        <begin position="113"/>
        <end position="124"/>
    </location>
</feature>
<feature type="helix" evidence="30">
    <location>
        <begin position="128"/>
        <end position="137"/>
    </location>
</feature>
<feature type="turn" evidence="30">
    <location>
        <begin position="146"/>
        <end position="148"/>
    </location>
</feature>
<feature type="helix" evidence="30">
    <location>
        <begin position="152"/>
        <end position="158"/>
    </location>
</feature>
<feature type="turn" evidence="29">
    <location>
        <begin position="160"/>
        <end position="162"/>
    </location>
</feature>
<feature type="helix" evidence="30">
    <location>
        <begin position="163"/>
        <end position="171"/>
    </location>
</feature>
<feature type="helix" evidence="30">
    <location>
        <begin position="186"/>
        <end position="192"/>
    </location>
</feature>
<feature type="helix" evidence="30">
    <location>
        <begin position="196"/>
        <end position="204"/>
    </location>
</feature>
<feature type="helix" evidence="30">
    <location>
        <begin position="219"/>
        <end position="226"/>
    </location>
</feature>
<feature type="helix" evidence="30">
    <location>
        <begin position="231"/>
        <end position="238"/>
    </location>
</feature>
<feature type="helix" evidence="30">
    <location>
        <begin position="253"/>
        <end position="260"/>
    </location>
</feature>
<feature type="helix" evidence="30">
    <location>
        <begin position="263"/>
        <end position="271"/>
    </location>
</feature>
<feature type="helix" evidence="30">
    <location>
        <begin position="286"/>
        <end position="292"/>
    </location>
</feature>
<feature type="helix" evidence="30">
    <location>
        <begin position="296"/>
        <end position="304"/>
    </location>
</feature>
<feature type="helix" evidence="30">
    <location>
        <begin position="319"/>
        <end position="326"/>
    </location>
</feature>
<feature type="helix" evidence="30">
    <location>
        <begin position="329"/>
        <end position="337"/>
    </location>
</feature>
<feature type="helix" evidence="30">
    <location>
        <begin position="340"/>
        <end position="342"/>
    </location>
</feature>
<feature type="strand" evidence="28">
    <location>
        <begin position="544"/>
        <end position="552"/>
    </location>
</feature>
<feature type="strand" evidence="28">
    <location>
        <begin position="555"/>
        <end position="560"/>
    </location>
</feature>
<feature type="strand" evidence="27">
    <location>
        <begin position="564"/>
        <end position="574"/>
    </location>
</feature>
<feature type="strand" evidence="28">
    <location>
        <begin position="577"/>
        <end position="579"/>
    </location>
</feature>
<feature type="strand" evidence="27">
    <location>
        <begin position="582"/>
        <end position="586"/>
    </location>
</feature>
<feature type="strand" evidence="27">
    <location>
        <begin position="601"/>
        <end position="603"/>
    </location>
</feature>
<feature type="strand" evidence="27">
    <location>
        <begin position="608"/>
        <end position="612"/>
    </location>
</feature>
<feature type="strand" evidence="27">
    <location>
        <begin position="614"/>
        <end position="617"/>
    </location>
</feature>
<feature type="helix" evidence="27">
    <location>
        <begin position="618"/>
        <end position="621"/>
    </location>
</feature>
<feature type="strand" evidence="27">
    <location>
        <begin position="628"/>
        <end position="632"/>
    </location>
</feature>
<feature type="helix" evidence="27">
    <location>
        <begin position="643"/>
        <end position="651"/>
    </location>
</feature>
<feature type="turn" evidence="27">
    <location>
        <begin position="652"/>
        <end position="654"/>
    </location>
</feature>
<feature type="strand" evidence="27">
    <location>
        <begin position="655"/>
        <end position="665"/>
    </location>
</feature>
<proteinExistence type="evidence at protein level"/>